<proteinExistence type="inferred from homology"/>
<comment type="function">
    <text evidence="1">Involved in mRNA degradation. Catalyzes the phosphorolysis of single-stranded polyribonucleotides processively in the 3'- to 5'-direction.</text>
</comment>
<comment type="catalytic activity">
    <reaction evidence="1">
        <text>RNA(n+1) + phosphate = RNA(n) + a ribonucleoside 5'-diphosphate</text>
        <dbReference type="Rhea" id="RHEA:22096"/>
        <dbReference type="Rhea" id="RHEA-COMP:14527"/>
        <dbReference type="Rhea" id="RHEA-COMP:17342"/>
        <dbReference type="ChEBI" id="CHEBI:43474"/>
        <dbReference type="ChEBI" id="CHEBI:57930"/>
        <dbReference type="ChEBI" id="CHEBI:140395"/>
        <dbReference type="EC" id="2.7.7.8"/>
    </reaction>
</comment>
<comment type="cofactor">
    <cofactor evidence="1">
        <name>Mg(2+)</name>
        <dbReference type="ChEBI" id="CHEBI:18420"/>
    </cofactor>
</comment>
<comment type="subcellular location">
    <subcellularLocation>
        <location evidence="1">Cytoplasm</location>
    </subcellularLocation>
</comment>
<comment type="similarity">
    <text evidence="1">Belongs to the polyribonucleotide nucleotidyltransferase family.</text>
</comment>
<accession>A3DCH7</accession>
<dbReference type="EC" id="2.7.7.8" evidence="1"/>
<dbReference type="EMBL" id="CP000568">
    <property type="protein sequence ID" value="ABN51656.1"/>
    <property type="molecule type" value="Genomic_DNA"/>
</dbReference>
<dbReference type="RefSeq" id="WP_004463117.1">
    <property type="nucleotide sequence ID" value="NC_009012.1"/>
</dbReference>
<dbReference type="SMR" id="A3DCH7"/>
<dbReference type="STRING" id="203119.Cthe_0418"/>
<dbReference type="GeneID" id="35804284"/>
<dbReference type="KEGG" id="cth:Cthe_0418"/>
<dbReference type="eggNOG" id="COG1185">
    <property type="taxonomic scope" value="Bacteria"/>
</dbReference>
<dbReference type="HOGENOM" id="CLU_004217_2_2_9"/>
<dbReference type="OrthoDB" id="9804305at2"/>
<dbReference type="Proteomes" id="UP000002145">
    <property type="component" value="Chromosome"/>
</dbReference>
<dbReference type="GO" id="GO:0005829">
    <property type="term" value="C:cytosol"/>
    <property type="evidence" value="ECO:0007669"/>
    <property type="project" value="TreeGrafter"/>
</dbReference>
<dbReference type="GO" id="GO:0000175">
    <property type="term" value="F:3'-5'-RNA exonuclease activity"/>
    <property type="evidence" value="ECO:0007669"/>
    <property type="project" value="TreeGrafter"/>
</dbReference>
<dbReference type="GO" id="GO:0000287">
    <property type="term" value="F:magnesium ion binding"/>
    <property type="evidence" value="ECO:0007669"/>
    <property type="project" value="UniProtKB-UniRule"/>
</dbReference>
<dbReference type="GO" id="GO:0004654">
    <property type="term" value="F:polyribonucleotide nucleotidyltransferase activity"/>
    <property type="evidence" value="ECO:0007669"/>
    <property type="project" value="UniProtKB-UniRule"/>
</dbReference>
<dbReference type="GO" id="GO:0003723">
    <property type="term" value="F:RNA binding"/>
    <property type="evidence" value="ECO:0007669"/>
    <property type="project" value="UniProtKB-UniRule"/>
</dbReference>
<dbReference type="GO" id="GO:0006402">
    <property type="term" value="P:mRNA catabolic process"/>
    <property type="evidence" value="ECO:0007669"/>
    <property type="project" value="UniProtKB-UniRule"/>
</dbReference>
<dbReference type="GO" id="GO:0006396">
    <property type="term" value="P:RNA processing"/>
    <property type="evidence" value="ECO:0007669"/>
    <property type="project" value="InterPro"/>
</dbReference>
<dbReference type="CDD" id="cd02393">
    <property type="entry name" value="KH-I_PNPase"/>
    <property type="match status" value="1"/>
</dbReference>
<dbReference type="CDD" id="cd11363">
    <property type="entry name" value="RNase_PH_PNPase_1"/>
    <property type="match status" value="1"/>
</dbReference>
<dbReference type="CDD" id="cd11364">
    <property type="entry name" value="RNase_PH_PNPase_2"/>
    <property type="match status" value="1"/>
</dbReference>
<dbReference type="CDD" id="cd04472">
    <property type="entry name" value="S1_PNPase"/>
    <property type="match status" value="1"/>
</dbReference>
<dbReference type="FunFam" id="2.40.50.140:FF:000023">
    <property type="entry name" value="Polyribonucleotide nucleotidyltransferase"/>
    <property type="match status" value="1"/>
</dbReference>
<dbReference type="FunFam" id="3.30.1370.10:FF:000001">
    <property type="entry name" value="Polyribonucleotide nucleotidyltransferase"/>
    <property type="match status" value="1"/>
</dbReference>
<dbReference type="FunFam" id="3.30.230.70:FF:000001">
    <property type="entry name" value="Polyribonucleotide nucleotidyltransferase"/>
    <property type="match status" value="1"/>
</dbReference>
<dbReference type="FunFam" id="3.30.230.70:FF:000002">
    <property type="entry name" value="Polyribonucleotide nucleotidyltransferase"/>
    <property type="match status" value="1"/>
</dbReference>
<dbReference type="Gene3D" id="3.30.230.70">
    <property type="entry name" value="GHMP Kinase, N-terminal domain"/>
    <property type="match status" value="2"/>
</dbReference>
<dbReference type="Gene3D" id="3.30.1370.10">
    <property type="entry name" value="K Homology domain, type 1"/>
    <property type="match status" value="1"/>
</dbReference>
<dbReference type="Gene3D" id="2.40.50.140">
    <property type="entry name" value="Nucleic acid-binding proteins"/>
    <property type="match status" value="1"/>
</dbReference>
<dbReference type="HAMAP" id="MF_01595">
    <property type="entry name" value="PNPase"/>
    <property type="match status" value="1"/>
</dbReference>
<dbReference type="InterPro" id="IPR001247">
    <property type="entry name" value="ExoRNase_PH_dom1"/>
</dbReference>
<dbReference type="InterPro" id="IPR015847">
    <property type="entry name" value="ExoRNase_PH_dom2"/>
</dbReference>
<dbReference type="InterPro" id="IPR036345">
    <property type="entry name" value="ExoRNase_PH_dom2_sf"/>
</dbReference>
<dbReference type="InterPro" id="IPR004087">
    <property type="entry name" value="KH_dom"/>
</dbReference>
<dbReference type="InterPro" id="IPR004088">
    <property type="entry name" value="KH_dom_type_1"/>
</dbReference>
<dbReference type="InterPro" id="IPR036612">
    <property type="entry name" value="KH_dom_type_1_sf"/>
</dbReference>
<dbReference type="InterPro" id="IPR012340">
    <property type="entry name" value="NA-bd_OB-fold"/>
</dbReference>
<dbReference type="InterPro" id="IPR012162">
    <property type="entry name" value="PNPase"/>
</dbReference>
<dbReference type="InterPro" id="IPR027408">
    <property type="entry name" value="PNPase/RNase_PH_dom_sf"/>
</dbReference>
<dbReference type="InterPro" id="IPR015848">
    <property type="entry name" value="PNPase_PH_RNA-bd_bac/org-type"/>
</dbReference>
<dbReference type="InterPro" id="IPR036456">
    <property type="entry name" value="PNPase_PH_RNA-bd_sf"/>
</dbReference>
<dbReference type="InterPro" id="IPR020568">
    <property type="entry name" value="Ribosomal_Su5_D2-typ_SF"/>
</dbReference>
<dbReference type="InterPro" id="IPR003029">
    <property type="entry name" value="S1_domain"/>
</dbReference>
<dbReference type="NCBIfam" id="TIGR03591">
    <property type="entry name" value="polynuc_phos"/>
    <property type="match status" value="1"/>
</dbReference>
<dbReference type="NCBIfam" id="NF008805">
    <property type="entry name" value="PRK11824.1"/>
    <property type="match status" value="1"/>
</dbReference>
<dbReference type="PANTHER" id="PTHR11252">
    <property type="entry name" value="POLYRIBONUCLEOTIDE NUCLEOTIDYLTRANSFERASE"/>
    <property type="match status" value="1"/>
</dbReference>
<dbReference type="PANTHER" id="PTHR11252:SF0">
    <property type="entry name" value="POLYRIBONUCLEOTIDE NUCLEOTIDYLTRANSFERASE 1, MITOCHONDRIAL"/>
    <property type="match status" value="1"/>
</dbReference>
<dbReference type="Pfam" id="PF00013">
    <property type="entry name" value="KH_1"/>
    <property type="match status" value="1"/>
</dbReference>
<dbReference type="Pfam" id="PF03726">
    <property type="entry name" value="PNPase"/>
    <property type="match status" value="1"/>
</dbReference>
<dbReference type="Pfam" id="PF01138">
    <property type="entry name" value="RNase_PH"/>
    <property type="match status" value="2"/>
</dbReference>
<dbReference type="Pfam" id="PF03725">
    <property type="entry name" value="RNase_PH_C"/>
    <property type="match status" value="1"/>
</dbReference>
<dbReference type="Pfam" id="PF00575">
    <property type="entry name" value="S1"/>
    <property type="match status" value="1"/>
</dbReference>
<dbReference type="PIRSF" id="PIRSF005499">
    <property type="entry name" value="PNPase"/>
    <property type="match status" value="1"/>
</dbReference>
<dbReference type="SMART" id="SM00322">
    <property type="entry name" value="KH"/>
    <property type="match status" value="1"/>
</dbReference>
<dbReference type="SMART" id="SM00316">
    <property type="entry name" value="S1"/>
    <property type="match status" value="1"/>
</dbReference>
<dbReference type="SUPFAM" id="SSF54791">
    <property type="entry name" value="Eukaryotic type KH-domain (KH-domain type I)"/>
    <property type="match status" value="1"/>
</dbReference>
<dbReference type="SUPFAM" id="SSF50249">
    <property type="entry name" value="Nucleic acid-binding proteins"/>
    <property type="match status" value="1"/>
</dbReference>
<dbReference type="SUPFAM" id="SSF46915">
    <property type="entry name" value="Polynucleotide phosphorylase/guanosine pentaphosphate synthase (PNPase/GPSI), domain 3"/>
    <property type="match status" value="1"/>
</dbReference>
<dbReference type="SUPFAM" id="SSF55666">
    <property type="entry name" value="Ribonuclease PH domain 2-like"/>
    <property type="match status" value="2"/>
</dbReference>
<dbReference type="SUPFAM" id="SSF54211">
    <property type="entry name" value="Ribosomal protein S5 domain 2-like"/>
    <property type="match status" value="2"/>
</dbReference>
<dbReference type="PROSITE" id="PS50084">
    <property type="entry name" value="KH_TYPE_1"/>
    <property type="match status" value="1"/>
</dbReference>
<dbReference type="PROSITE" id="PS50126">
    <property type="entry name" value="S1"/>
    <property type="match status" value="1"/>
</dbReference>
<gene>
    <name evidence="1" type="primary">pnp</name>
    <name type="ordered locus">Cthe_0418</name>
</gene>
<protein>
    <recommendedName>
        <fullName evidence="1">Polyribonucleotide nucleotidyltransferase</fullName>
        <ecNumber evidence="1">2.7.7.8</ecNumber>
    </recommendedName>
    <alternativeName>
        <fullName evidence="1">Polynucleotide phosphorylase</fullName>
        <shortName evidence="1">PNPase</shortName>
    </alternativeName>
</protein>
<name>PNP_ACET2</name>
<evidence type="ECO:0000255" key="1">
    <source>
        <dbReference type="HAMAP-Rule" id="MF_01595"/>
    </source>
</evidence>
<feature type="chain" id="PRO_0000329605" description="Polyribonucleotide nucleotidyltransferase">
    <location>
        <begin position="1"/>
        <end position="700"/>
    </location>
</feature>
<feature type="domain" description="KH" evidence="1">
    <location>
        <begin position="554"/>
        <end position="613"/>
    </location>
</feature>
<feature type="domain" description="S1 motif" evidence="1">
    <location>
        <begin position="623"/>
        <end position="691"/>
    </location>
</feature>
<feature type="binding site" evidence="1">
    <location>
        <position position="486"/>
    </location>
    <ligand>
        <name>Mg(2+)</name>
        <dbReference type="ChEBI" id="CHEBI:18420"/>
    </ligand>
</feature>
<feature type="binding site" evidence="1">
    <location>
        <position position="492"/>
    </location>
    <ligand>
        <name>Mg(2+)</name>
        <dbReference type="ChEBI" id="CHEBI:18420"/>
    </ligand>
</feature>
<reference key="1">
    <citation type="submission" date="2007-02" db="EMBL/GenBank/DDBJ databases">
        <title>Complete sequence of Clostridium thermocellum ATCC 27405.</title>
        <authorList>
            <consortium name="US DOE Joint Genome Institute"/>
            <person name="Copeland A."/>
            <person name="Lucas S."/>
            <person name="Lapidus A."/>
            <person name="Barry K."/>
            <person name="Detter J.C."/>
            <person name="Glavina del Rio T."/>
            <person name="Hammon N."/>
            <person name="Israni S."/>
            <person name="Dalin E."/>
            <person name="Tice H."/>
            <person name="Pitluck S."/>
            <person name="Chertkov O."/>
            <person name="Brettin T."/>
            <person name="Bruce D."/>
            <person name="Han C."/>
            <person name="Tapia R."/>
            <person name="Gilna P."/>
            <person name="Schmutz J."/>
            <person name="Larimer F."/>
            <person name="Land M."/>
            <person name="Hauser L."/>
            <person name="Kyrpides N."/>
            <person name="Mikhailova N."/>
            <person name="Wu J.H.D."/>
            <person name="Newcomb M."/>
            <person name="Richardson P."/>
        </authorList>
    </citation>
    <scope>NUCLEOTIDE SEQUENCE [LARGE SCALE GENOMIC DNA]</scope>
    <source>
        <strain>ATCC 27405 / DSM 1237 / JCM 9322 / NBRC 103400 / NCIMB 10682 / NRRL B-4536 / VPI 7372</strain>
    </source>
</reference>
<organism>
    <name type="scientific">Acetivibrio thermocellus (strain ATCC 27405 / DSM 1237 / JCM 9322 / NBRC 103400 / NCIMB 10682 / NRRL B-4536 / VPI 7372)</name>
    <name type="common">Clostridium thermocellum</name>
    <dbReference type="NCBI Taxonomy" id="203119"/>
    <lineage>
        <taxon>Bacteria</taxon>
        <taxon>Bacillati</taxon>
        <taxon>Bacillota</taxon>
        <taxon>Clostridia</taxon>
        <taxon>Eubacteriales</taxon>
        <taxon>Oscillospiraceae</taxon>
        <taxon>Acetivibrio</taxon>
    </lineage>
</organism>
<keyword id="KW-0963">Cytoplasm</keyword>
<keyword id="KW-0460">Magnesium</keyword>
<keyword id="KW-0479">Metal-binding</keyword>
<keyword id="KW-0548">Nucleotidyltransferase</keyword>
<keyword id="KW-1185">Reference proteome</keyword>
<keyword id="KW-0694">RNA-binding</keyword>
<keyword id="KW-0808">Transferase</keyword>
<sequence length="700" mass="77318">MYKTFSMELAGRTLTIETGKLAQLANGSVLVRYGDTVVLSTATASATPREGVDFFPLSVDYEERLYAVGKIPGGFIKREGKPSEKAILTARVIDRPLRPLFPKDLRNDVAIVNTVLSVDQDNSPELAALLGSSIAVSISDIPFNGPVGAVILGLIDGEVIINPTEKQKEISQMYVTLAGTRNKIVMIEAGANEVPDEVMLDAIKKGHEEIKKIVDFIDGIVKEVGKPKFEYESAEVPEEIFNAVREYAYDKMREAVLAVDKQVRDKNIDDLTKEITEHFAEVFPEMEPAIKEAIYKLEKKVVREYILEEGRRVDGRRLDEIRPLSAEVGLLPRVHGSGLFTRGQTQVLSSVTLGAMGDVQILDGIDTEETKRYMHHYNFPGFSVGEAKSSRGPGRREIGHGALAERALEPVIPSEEEFPYTIRVVSEVLMSNGSTSQGSVCGSTLALMDAGVPIKKPVAGISAGLVVDENNPDRFVTFMDIQGIEDFFGDMDFKVAGTKDGITAIQVDIKIDGLTEEIIKQAFELTRKGRLYIIDNVLLKAIPEPRKQMSKYAPKIISTTINPDKIREVIGPGGKMINKIIDETGVKIDINDDGRVYIFSSDIQAGKRARSMIEAIAKDIEPGQVFLGRVIRVTSFGAFVEFLPGKEGLVHISKLDKKRVERVEDIVRVGDQILVKVIEIDKQGRVNLSRKDAMEDEWDK</sequence>